<accession>Q5YNB0</accession>
<evidence type="ECO:0000255" key="1">
    <source>
        <dbReference type="HAMAP-Rule" id="MF_00452"/>
    </source>
</evidence>
<sequence length="610" mass="67710">MTSATIPGLRGSDGQAPTEHSELLAWVQEVAELTQPERVVWADGSDEEWERLTDQLVEAGTFKRLDPKKKPNSFLALSDPSDVARVESRTFICSRSEADAGPTNNWVDPAEMRATMTELYRGCMKGRTMYVVPFCMGPLGAEDPKLGVEITDSEYVVVSMRVMTRMGKAALEKMGTDRPFVKALHSVGAPLAEGQQDVPWPCNDTKYITHFPEDREIWSYGSGYGGNALLGKKCYSLRIASAMAHDEGWLAEHMLILKLISPENKAYYIAAAFPSACGKTNLAMIQPTVPGWRAETLGDDIAWMRFGKDGRLYAVNPEFGFFGVAPGTNHSSNPNAMATMEAGNTVYTNVALTDDNDVWWEGLEGEPDHLIDWKGNDWYLRETETLAAHPNSRYCTPMSQCPILAPEWDDPQGVPISAILFGGRRKTTVPLVTESFDWQHGVFMGATLSSEQTAAAEGKVGTVRRDPMAMLPFLGYHVGDYLDHWIQLGKSADATKLPKIFYVNWFRRGEDGRFLWPGFGENSRVLEWIVGRIEGSADAEETAIGNVPRAAHLDLDGLDVDPADVDEALAVKAEEWRKEIPLIEEWFEFVGDKLPSGVRDEFEALKQRLG</sequence>
<proteinExistence type="inferred from homology"/>
<reference key="1">
    <citation type="journal article" date="2004" name="Proc. Natl. Acad. Sci. U.S.A.">
        <title>The complete genomic sequence of Nocardia farcinica IFM 10152.</title>
        <authorList>
            <person name="Ishikawa J."/>
            <person name="Yamashita A."/>
            <person name="Mikami Y."/>
            <person name="Hoshino Y."/>
            <person name="Kurita H."/>
            <person name="Hotta K."/>
            <person name="Shiba T."/>
            <person name="Hattori M."/>
        </authorList>
    </citation>
    <scope>NUCLEOTIDE SEQUENCE [LARGE SCALE GENOMIC DNA]</scope>
    <source>
        <strain>IFM 10152</strain>
    </source>
</reference>
<organism>
    <name type="scientific">Nocardia farcinica (strain IFM 10152)</name>
    <dbReference type="NCBI Taxonomy" id="247156"/>
    <lineage>
        <taxon>Bacteria</taxon>
        <taxon>Bacillati</taxon>
        <taxon>Actinomycetota</taxon>
        <taxon>Actinomycetes</taxon>
        <taxon>Mycobacteriales</taxon>
        <taxon>Nocardiaceae</taxon>
        <taxon>Nocardia</taxon>
    </lineage>
</organism>
<feature type="chain" id="PRO_0000103612" description="Phosphoenolpyruvate carboxykinase [GTP]">
    <location>
        <begin position="1"/>
        <end position="610"/>
    </location>
</feature>
<feature type="active site" evidence="1">
    <location>
        <position position="277"/>
    </location>
</feature>
<feature type="binding site" evidence="1">
    <location>
        <position position="85"/>
    </location>
    <ligand>
        <name>substrate</name>
    </ligand>
</feature>
<feature type="binding site" evidence="1">
    <location>
        <begin position="224"/>
        <end position="226"/>
    </location>
    <ligand>
        <name>substrate</name>
    </ligand>
</feature>
<feature type="binding site" evidence="1">
    <location>
        <position position="233"/>
    </location>
    <ligand>
        <name>Mn(2+)</name>
        <dbReference type="ChEBI" id="CHEBI:29035"/>
    </ligand>
</feature>
<feature type="binding site" evidence="1">
    <location>
        <position position="253"/>
    </location>
    <ligand>
        <name>Mn(2+)</name>
        <dbReference type="ChEBI" id="CHEBI:29035"/>
    </ligand>
</feature>
<feature type="binding site" evidence="1">
    <location>
        <position position="275"/>
    </location>
    <ligand>
        <name>substrate</name>
    </ligand>
</feature>
<feature type="binding site" evidence="1">
    <location>
        <begin position="276"/>
        <end position="281"/>
    </location>
    <ligand>
        <name>GTP</name>
        <dbReference type="ChEBI" id="CHEBI:37565"/>
    </ligand>
</feature>
<feature type="binding site" evidence="1">
    <location>
        <position position="300"/>
    </location>
    <ligand>
        <name>Mn(2+)</name>
        <dbReference type="ChEBI" id="CHEBI:29035"/>
    </ligand>
</feature>
<feature type="binding site" evidence="1">
    <location>
        <begin position="391"/>
        <end position="393"/>
    </location>
    <ligand>
        <name>substrate</name>
    </ligand>
</feature>
<feature type="binding site" evidence="1">
    <location>
        <position position="393"/>
    </location>
    <ligand>
        <name>GTP</name>
        <dbReference type="ChEBI" id="CHEBI:37565"/>
    </ligand>
</feature>
<feature type="binding site" evidence="1">
    <location>
        <position position="424"/>
    </location>
    <ligand>
        <name>GTP</name>
        <dbReference type="ChEBI" id="CHEBI:37565"/>
    </ligand>
</feature>
<feature type="binding site" evidence="1">
    <location>
        <begin position="519"/>
        <end position="522"/>
    </location>
    <ligand>
        <name>GTP</name>
        <dbReference type="ChEBI" id="CHEBI:37565"/>
    </ligand>
</feature>
<keyword id="KW-0963">Cytoplasm</keyword>
<keyword id="KW-0210">Decarboxylase</keyword>
<keyword id="KW-0312">Gluconeogenesis</keyword>
<keyword id="KW-0342">GTP-binding</keyword>
<keyword id="KW-0456">Lyase</keyword>
<keyword id="KW-0464">Manganese</keyword>
<keyword id="KW-0479">Metal-binding</keyword>
<keyword id="KW-0547">Nucleotide-binding</keyword>
<keyword id="KW-1185">Reference proteome</keyword>
<comment type="function">
    <text evidence="1">Catalyzes the conversion of oxaloacetate (OAA) to phosphoenolpyruvate (PEP), the rate-limiting step in the metabolic pathway that produces glucose from lactate and other precursors derived from the citric acid cycle.</text>
</comment>
<comment type="catalytic activity">
    <reaction evidence="1">
        <text>oxaloacetate + GTP = phosphoenolpyruvate + GDP + CO2</text>
        <dbReference type="Rhea" id="RHEA:10388"/>
        <dbReference type="ChEBI" id="CHEBI:16452"/>
        <dbReference type="ChEBI" id="CHEBI:16526"/>
        <dbReference type="ChEBI" id="CHEBI:37565"/>
        <dbReference type="ChEBI" id="CHEBI:58189"/>
        <dbReference type="ChEBI" id="CHEBI:58702"/>
        <dbReference type="EC" id="4.1.1.32"/>
    </reaction>
</comment>
<comment type="cofactor">
    <cofactor evidence="1">
        <name>Mn(2+)</name>
        <dbReference type="ChEBI" id="CHEBI:29035"/>
    </cofactor>
    <text evidence="1">Binds 1 Mn(2+) ion per subunit.</text>
</comment>
<comment type="pathway">
    <text evidence="1">Carbohydrate biosynthesis; gluconeogenesis.</text>
</comment>
<comment type="subunit">
    <text evidence="1">Monomer.</text>
</comment>
<comment type="subcellular location">
    <subcellularLocation>
        <location evidence="1">Cytoplasm</location>
    </subcellularLocation>
</comment>
<comment type="similarity">
    <text evidence="1">Belongs to the phosphoenolpyruvate carboxykinase [GTP] family.</text>
</comment>
<protein>
    <recommendedName>
        <fullName evidence="1">Phosphoenolpyruvate carboxykinase [GTP]</fullName>
        <shortName evidence="1">PEP carboxykinase</shortName>
        <shortName evidence="1">PEPCK</shortName>
        <ecNumber evidence="1">4.1.1.32</ecNumber>
    </recommendedName>
</protein>
<dbReference type="EC" id="4.1.1.32" evidence="1"/>
<dbReference type="EMBL" id="AP006618">
    <property type="protein sequence ID" value="BAD60331.1"/>
    <property type="molecule type" value="Genomic_DNA"/>
</dbReference>
<dbReference type="RefSeq" id="WP_011212013.1">
    <property type="nucleotide sequence ID" value="NC_006361.1"/>
</dbReference>
<dbReference type="SMR" id="Q5YNB0"/>
<dbReference type="STRING" id="247156.NFA_54790"/>
<dbReference type="GeneID" id="61136048"/>
<dbReference type="KEGG" id="nfa:NFA_54790"/>
<dbReference type="eggNOG" id="COG1274">
    <property type="taxonomic scope" value="Bacteria"/>
</dbReference>
<dbReference type="HOGENOM" id="CLU_028872_1_1_11"/>
<dbReference type="OrthoDB" id="9758871at2"/>
<dbReference type="UniPathway" id="UPA00138"/>
<dbReference type="Proteomes" id="UP000006820">
    <property type="component" value="Chromosome"/>
</dbReference>
<dbReference type="GO" id="GO:0005829">
    <property type="term" value="C:cytosol"/>
    <property type="evidence" value="ECO:0007669"/>
    <property type="project" value="TreeGrafter"/>
</dbReference>
<dbReference type="GO" id="GO:0005525">
    <property type="term" value="F:GTP binding"/>
    <property type="evidence" value="ECO:0007669"/>
    <property type="project" value="UniProtKB-UniRule"/>
</dbReference>
<dbReference type="GO" id="GO:0030145">
    <property type="term" value="F:manganese ion binding"/>
    <property type="evidence" value="ECO:0007669"/>
    <property type="project" value="UniProtKB-UniRule"/>
</dbReference>
<dbReference type="GO" id="GO:0004613">
    <property type="term" value="F:phosphoenolpyruvate carboxykinase (GTP) activity"/>
    <property type="evidence" value="ECO:0007669"/>
    <property type="project" value="UniProtKB-UniRule"/>
</dbReference>
<dbReference type="GO" id="GO:0071333">
    <property type="term" value="P:cellular response to glucose stimulus"/>
    <property type="evidence" value="ECO:0007669"/>
    <property type="project" value="TreeGrafter"/>
</dbReference>
<dbReference type="GO" id="GO:0006094">
    <property type="term" value="P:gluconeogenesis"/>
    <property type="evidence" value="ECO:0007669"/>
    <property type="project" value="UniProtKB-UniRule"/>
</dbReference>
<dbReference type="GO" id="GO:0046327">
    <property type="term" value="P:glycerol biosynthetic process from pyruvate"/>
    <property type="evidence" value="ECO:0007669"/>
    <property type="project" value="TreeGrafter"/>
</dbReference>
<dbReference type="GO" id="GO:0006107">
    <property type="term" value="P:oxaloacetate metabolic process"/>
    <property type="evidence" value="ECO:0007669"/>
    <property type="project" value="TreeGrafter"/>
</dbReference>
<dbReference type="GO" id="GO:0019543">
    <property type="term" value="P:propionate catabolic process"/>
    <property type="evidence" value="ECO:0007669"/>
    <property type="project" value="TreeGrafter"/>
</dbReference>
<dbReference type="GO" id="GO:0033993">
    <property type="term" value="P:response to lipid"/>
    <property type="evidence" value="ECO:0007669"/>
    <property type="project" value="TreeGrafter"/>
</dbReference>
<dbReference type="GO" id="GO:0042594">
    <property type="term" value="P:response to starvation"/>
    <property type="evidence" value="ECO:0007669"/>
    <property type="project" value="TreeGrafter"/>
</dbReference>
<dbReference type="CDD" id="cd00819">
    <property type="entry name" value="PEPCK_GTP"/>
    <property type="match status" value="1"/>
</dbReference>
<dbReference type="FunFam" id="3.40.449.10:FF:000005">
    <property type="entry name" value="Phosphoenolpyruvate carboxykinase [GTP]"/>
    <property type="match status" value="1"/>
</dbReference>
<dbReference type="Gene3D" id="3.90.228.20">
    <property type="match status" value="1"/>
</dbReference>
<dbReference type="Gene3D" id="3.40.449.10">
    <property type="entry name" value="Phosphoenolpyruvate Carboxykinase, domain 1"/>
    <property type="match status" value="1"/>
</dbReference>
<dbReference type="Gene3D" id="2.170.8.10">
    <property type="entry name" value="Phosphoenolpyruvate Carboxykinase, domain 2"/>
    <property type="match status" value="1"/>
</dbReference>
<dbReference type="HAMAP" id="MF_00452">
    <property type="entry name" value="PEPCK_GTP"/>
    <property type="match status" value="1"/>
</dbReference>
<dbReference type="InterPro" id="IPR018091">
    <property type="entry name" value="PEP_carboxykin_GTP_CS"/>
</dbReference>
<dbReference type="InterPro" id="IPR013035">
    <property type="entry name" value="PEP_carboxykinase_C"/>
</dbReference>
<dbReference type="InterPro" id="IPR008209">
    <property type="entry name" value="PEP_carboxykinase_GTP"/>
</dbReference>
<dbReference type="InterPro" id="IPR035077">
    <property type="entry name" value="PEP_carboxykinase_GTP_C"/>
</dbReference>
<dbReference type="InterPro" id="IPR035078">
    <property type="entry name" value="PEP_carboxykinase_GTP_N"/>
</dbReference>
<dbReference type="InterPro" id="IPR008210">
    <property type="entry name" value="PEP_carboxykinase_N"/>
</dbReference>
<dbReference type="NCBIfam" id="NF003253">
    <property type="entry name" value="PRK04210.1"/>
    <property type="match status" value="1"/>
</dbReference>
<dbReference type="PANTHER" id="PTHR11561">
    <property type="entry name" value="PHOSPHOENOLPYRUVATE CARBOXYKINASE"/>
    <property type="match status" value="1"/>
</dbReference>
<dbReference type="PANTHER" id="PTHR11561:SF0">
    <property type="entry name" value="PHOSPHOENOLPYRUVATE CARBOXYKINASE [GTP]-RELATED"/>
    <property type="match status" value="1"/>
</dbReference>
<dbReference type="Pfam" id="PF00821">
    <property type="entry name" value="PEPCK_GTP"/>
    <property type="match status" value="1"/>
</dbReference>
<dbReference type="Pfam" id="PF17297">
    <property type="entry name" value="PEPCK_N"/>
    <property type="match status" value="1"/>
</dbReference>
<dbReference type="PIRSF" id="PIRSF001348">
    <property type="entry name" value="PEP_carboxykinase_GTP"/>
    <property type="match status" value="1"/>
</dbReference>
<dbReference type="SUPFAM" id="SSF68923">
    <property type="entry name" value="PEP carboxykinase N-terminal domain"/>
    <property type="match status" value="1"/>
</dbReference>
<dbReference type="SUPFAM" id="SSF53795">
    <property type="entry name" value="PEP carboxykinase-like"/>
    <property type="match status" value="1"/>
</dbReference>
<dbReference type="PROSITE" id="PS00505">
    <property type="entry name" value="PEPCK_GTP"/>
    <property type="match status" value="1"/>
</dbReference>
<name>PCKG_NOCFA</name>
<gene>
    <name evidence="1" type="primary">pckG</name>
    <name type="ordered locus">NFA_54790</name>
</gene>